<proteinExistence type="evidence at protein level"/>
<reference evidence="5 6" key="1">
    <citation type="journal article" date="2001" name="Genes Cells">
        <title>Identification and expression of a novel gene in odour-taste associative learning in the terrestrial slug.</title>
        <authorList>
            <person name="Nakaya T."/>
            <person name="Kawahara S."/>
            <person name="Watanabe S."/>
            <person name="Lee D.-S."/>
            <person name="Suzuki T."/>
            <person name="Kirino Y."/>
        </authorList>
    </citation>
    <scope>NUCLEOTIDE SEQUENCE [MRNA]</scope>
    <scope>FUNCTION</scope>
    <scope>SUBCELLULAR LOCATION</scope>
    <scope>TISSUE SPECIFICITY</scope>
    <scope>INDUCTION</scope>
</reference>
<comment type="function">
    <text evidence="3">May be involved in modulating long-term memory formation and retention, at least with respect to odor-taste associative learning.</text>
</comment>
<comment type="subcellular location">
    <subcellularLocation>
        <location evidence="3">Cytoplasm</location>
    </subcellularLocation>
    <subcellularLocation>
        <location evidence="3">Secreted</location>
    </subcellularLocation>
    <text evidence="3">Secreted to the cell surface, and to the terminals of neurites.</text>
</comment>
<comment type="tissue specificity">
    <text evidence="3">Expressed predominantly in cerebral ganglia (at protein level). The mRNA is highly expressed in cerebral ganglia, and is detected at lower levels in visceral-pedal ganglia, head, and body, but is not detected in the tail.</text>
</comment>
<comment type="induction">
    <text evidence="3">Up-regulated in the somata of the procerebral neurons after associative conditioning with paired presentation of a carrot juice odor and an aversive quinidine taste.</text>
</comment>
<comment type="similarity">
    <text evidence="1 5">Belongs to the learning-associated protein family.</text>
</comment>
<feature type="chain" id="PRO_0000365622" description="18 kDa learning-associated protein of slug">
    <location>
        <begin position="1"/>
        <end position="121"/>
    </location>
</feature>
<feature type="region of interest" description="Disordered" evidence="2">
    <location>
        <begin position="44"/>
        <end position="67"/>
    </location>
</feature>
<feature type="region of interest" description="Disordered" evidence="2">
    <location>
        <begin position="95"/>
        <end position="121"/>
    </location>
</feature>
<feature type="compositionally biased region" description="Polar residues" evidence="2">
    <location>
        <begin position="45"/>
        <end position="64"/>
    </location>
</feature>
<evidence type="ECO:0000255" key="1"/>
<evidence type="ECO:0000256" key="2">
    <source>
        <dbReference type="SAM" id="MobiDB-lite"/>
    </source>
</evidence>
<evidence type="ECO:0000269" key="3">
    <source>
    </source>
</evidence>
<evidence type="ECO:0000303" key="4">
    <source>
    </source>
</evidence>
<evidence type="ECO:0000305" key="5"/>
<evidence type="ECO:0000312" key="6">
    <source>
        <dbReference type="EMBL" id="AAG35713.1"/>
    </source>
</evidence>
<keyword id="KW-0963">Cytoplasm</keyword>
<keyword id="KW-0964">Secreted</keyword>
<accession>Q9GNQ1</accession>
<protein>
    <recommendedName>
        <fullName>18 kDa learning-associated protein of slug</fullName>
    </recommendedName>
</protein>
<sequence length="121" mass="14152">MAKGLRCKHRIRMRNIKRQHYAKKDLERLKKIVSKSSELKDVVTMKTTEPIQENKTSEGTSTDGSMEVDKMAKVINKKTLQDENGHYPEWMNQRAVKKQKQKLNKLKIKKKSGKVSKAIKW</sequence>
<organism>
    <name type="scientific">Lehmannia marginata</name>
    <name type="common">Tree slug</name>
    <name type="synonym">Limax marginatus</name>
    <dbReference type="NCBI Taxonomy" id="381128"/>
    <lineage>
        <taxon>Eukaryota</taxon>
        <taxon>Metazoa</taxon>
        <taxon>Spiralia</taxon>
        <taxon>Lophotrochozoa</taxon>
        <taxon>Mollusca</taxon>
        <taxon>Gastropoda</taxon>
        <taxon>Heterobranchia</taxon>
        <taxon>Euthyneura</taxon>
        <taxon>Panpulmonata</taxon>
        <taxon>Eupulmonata</taxon>
        <taxon>Stylommatophora</taxon>
        <taxon>Helicina</taxon>
        <taxon>Limacoidea</taxon>
        <taxon>Limacidae</taxon>
        <taxon>Lehmannia</taxon>
    </lineage>
</organism>
<name>LPS18_LEHMA</name>
<gene>
    <name evidence="4" type="primary">LAPS18</name>
</gene>
<dbReference type="EMBL" id="AF207694">
    <property type="protein sequence ID" value="AAG35713.1"/>
    <property type="molecule type" value="mRNA"/>
</dbReference>
<dbReference type="SMR" id="Q9GNQ1"/>
<dbReference type="GO" id="GO:0005737">
    <property type="term" value="C:cytoplasm"/>
    <property type="evidence" value="ECO:0000314"/>
    <property type="project" value="UniProtKB"/>
</dbReference>
<dbReference type="GO" id="GO:0005576">
    <property type="term" value="C:extracellular region"/>
    <property type="evidence" value="ECO:0007669"/>
    <property type="project" value="UniProtKB-SubCell"/>
</dbReference>
<dbReference type="GO" id="GO:0005730">
    <property type="term" value="C:nucleolus"/>
    <property type="evidence" value="ECO:0007669"/>
    <property type="project" value="TreeGrafter"/>
</dbReference>
<dbReference type="GO" id="GO:0001099">
    <property type="term" value="F:basal RNA polymerase II transcription machinery binding"/>
    <property type="evidence" value="ECO:0007669"/>
    <property type="project" value="TreeGrafter"/>
</dbReference>
<dbReference type="GO" id="GO:0003723">
    <property type="term" value="F:RNA binding"/>
    <property type="evidence" value="ECO:0007669"/>
    <property type="project" value="TreeGrafter"/>
</dbReference>
<dbReference type="GO" id="GO:0097484">
    <property type="term" value="P:dendrite extension"/>
    <property type="evidence" value="ECO:0007669"/>
    <property type="project" value="TreeGrafter"/>
</dbReference>
<dbReference type="GO" id="GO:0007611">
    <property type="term" value="P:learning or memory"/>
    <property type="evidence" value="ECO:0000270"/>
    <property type="project" value="UniProtKB"/>
</dbReference>
<dbReference type="GO" id="GO:0007616">
    <property type="term" value="P:long-term memory"/>
    <property type="evidence" value="ECO:0000270"/>
    <property type="project" value="UniProtKB"/>
</dbReference>
<dbReference type="InterPro" id="IPR018784">
    <property type="entry name" value="LLPH-like"/>
</dbReference>
<dbReference type="PANTHER" id="PTHR34253">
    <property type="entry name" value="PROTEIN LLP HOMOLOG"/>
    <property type="match status" value="1"/>
</dbReference>
<dbReference type="PANTHER" id="PTHR34253:SF1">
    <property type="entry name" value="PROTEIN LLP HOMOLOG"/>
    <property type="match status" value="1"/>
</dbReference>
<dbReference type="Pfam" id="PF10169">
    <property type="entry name" value="LLPH"/>
    <property type="match status" value="1"/>
</dbReference>